<reference key="1">
    <citation type="journal article" date="1991" name="Eur. J. Biochem.">
        <title>Preproabrin: genomic cloning, characterisation and the expression of the A-chain in Escherichia coli.</title>
        <authorList>
            <person name="Wood K.A."/>
            <person name="Lord J.M."/>
            <person name="Wawrzynczak E.J."/>
            <person name="Piatak M."/>
        </authorList>
    </citation>
    <scope>NUCLEOTIDE SEQUENCE [GENOMIC DNA]</scope>
    <source>
        <tissue>Leaf</tissue>
    </source>
</reference>
<reference key="2">
    <citation type="submission" date="2009-04" db="UniProtKB">
        <title>Detection and partial characterization of lectin from Abrus precatorius.L.</title>
        <authorList>
            <person name="Ingale A.G."/>
        </authorList>
    </citation>
    <scope>PARTIAL PROTEIN SEQUENCE</scope>
    <scope>FUNCTION</scope>
    <source>
        <strain>GIS04</strain>
        <tissue>Seed</tissue>
    </source>
</reference>
<accession>P28590</accession>
<sequence length="562" mass="62818">MDKTLKLLILCLAWTCSFSALRCAARTYPPVATNQDQVIKFTTEGATSQSYKQFIEALRQRLTGGLIHDIPVLPDPTTVEERNRYITVELSNSERESIEVGIDVTNAYVVAYRAGSQSYFLRDAPASASTYLFPGTQRYSLRFDGSYGDLERWAHQTREEISLGLQALTHAISFLRSGASNDEEKARTLIVIIQMASEAARYRYISNRVGVSIRTGTAFQPDPAMLSLENNWDNLSGGVQQSVQDTFPNNVILSSINRQPVVVDSLSHPTVAVLALMLFVCNPPNANQSPLLIRSIVEESKICSSRYEPTVRIGGRDGMCVDVYDDGYHNGNRIIAWKCKDRLEENQLWTLKSDKTIRSNGKCLTTEGYAPGNYVMIYDCTSAVAEATYWEIWDNGTIINPKSALVLSAESSSMGGTLTVQTNEYLMRQGWRTGNNTSPFVTSISGYSDLCMQAQGSNVWLADCDNNKKEQQWALYTDGSIRSVQNTNNCLTSKDHKQGSPIVLMACSNGWASQRWLFKNDGSIYNLHDDMVMDVKRSDPSLKEIILHPYHGKPNQIWLTLF</sequence>
<evidence type="ECO:0000250" key="1"/>
<evidence type="ECO:0000255" key="2"/>
<evidence type="ECO:0000255" key="3">
    <source>
        <dbReference type="PROSITE-ProRule" id="PRU00174"/>
    </source>
</evidence>
<evidence type="ECO:0000269" key="4">
    <source ref="2"/>
</evidence>
<evidence type="ECO:0000305" key="5"/>
<comment type="function">
    <text evidence="4">The A chain is responsible for inhibiting protein synthesis through the catalytic inactivation of 60S ribosomal subunits by removing adenine from position 4,324 of 28S rRNA. Abrin-a is more toxic than ricin.</text>
</comment>
<comment type="function">
    <text evidence="4">The B chain is a galactose-specific lectin that facilitates the binding of abrin to the cell membrane that precedes endocytosis.</text>
</comment>
<comment type="catalytic activity">
    <reaction>
        <text>Endohydrolysis of the N-glycosidic bond at one specific adenosine on the 28S rRNA.</text>
        <dbReference type="EC" id="3.2.2.22"/>
    </reaction>
</comment>
<comment type="subunit">
    <text>Disulfide-linked dimer of A and B chains.</text>
</comment>
<comment type="domain">
    <text>The B chain is composed of two domains, each domain consists of 3 homologous subdomains (alpha, beta, gamma).</text>
</comment>
<comment type="similarity">
    <text evidence="5">In the N-terminal section; belongs to the ribosome-inactivating protein family. Type 2 RIP subfamily.</text>
</comment>
<dbReference type="EC" id="3.2.2.22"/>
<dbReference type="EMBL" id="X55667">
    <property type="protein sequence ID" value="CAA39202.1"/>
    <property type="molecule type" value="Genomic_DNA"/>
</dbReference>
<dbReference type="PIR" id="S16022">
    <property type="entry name" value="S16022"/>
</dbReference>
<dbReference type="SMR" id="P28590"/>
<dbReference type="Proteomes" id="UP000694853">
    <property type="component" value="Unplaced"/>
</dbReference>
<dbReference type="GO" id="GO:0030246">
    <property type="term" value="F:carbohydrate binding"/>
    <property type="evidence" value="ECO:0007669"/>
    <property type="project" value="UniProtKB-KW"/>
</dbReference>
<dbReference type="GO" id="GO:0030598">
    <property type="term" value="F:rRNA N-glycosylase activity"/>
    <property type="evidence" value="ECO:0007669"/>
    <property type="project" value="UniProtKB-EC"/>
</dbReference>
<dbReference type="GO" id="GO:0090729">
    <property type="term" value="F:toxin activity"/>
    <property type="evidence" value="ECO:0007669"/>
    <property type="project" value="UniProtKB-KW"/>
</dbReference>
<dbReference type="GO" id="GO:0006952">
    <property type="term" value="P:defense response"/>
    <property type="evidence" value="ECO:0007669"/>
    <property type="project" value="UniProtKB-KW"/>
</dbReference>
<dbReference type="GO" id="GO:0017148">
    <property type="term" value="P:negative regulation of translation"/>
    <property type="evidence" value="ECO:0007669"/>
    <property type="project" value="UniProtKB-KW"/>
</dbReference>
<dbReference type="CDD" id="cd23484">
    <property type="entry name" value="beta-trefoil_Ricin_abrin-like_rpt1"/>
    <property type="match status" value="1"/>
</dbReference>
<dbReference type="CDD" id="cd23491">
    <property type="entry name" value="beta-trefoil_Ricin_abrin-like_rpt2"/>
    <property type="match status" value="1"/>
</dbReference>
<dbReference type="FunFam" id="2.80.10.50:FF:000076">
    <property type="entry name" value="Beta-galactoside-specific lectin 1"/>
    <property type="match status" value="1"/>
</dbReference>
<dbReference type="FunFam" id="2.80.10.50:FF:000079">
    <property type="entry name" value="Ricin"/>
    <property type="match status" value="1"/>
</dbReference>
<dbReference type="FunFam" id="3.40.420.10:FF:000001">
    <property type="entry name" value="Ricin"/>
    <property type="match status" value="1"/>
</dbReference>
<dbReference type="Gene3D" id="2.80.10.50">
    <property type="match status" value="2"/>
</dbReference>
<dbReference type="Gene3D" id="3.40.420.10">
    <property type="entry name" value="Ricin (A subunit), domain 1"/>
    <property type="match status" value="1"/>
</dbReference>
<dbReference type="Gene3D" id="4.10.470.10">
    <property type="entry name" value="Ricin (A Subunit), domain 2"/>
    <property type="match status" value="1"/>
</dbReference>
<dbReference type="InterPro" id="IPR036041">
    <property type="entry name" value="Ribosome-inact_prot_sf"/>
</dbReference>
<dbReference type="InterPro" id="IPR017989">
    <property type="entry name" value="Ribosome_inactivat_1/2"/>
</dbReference>
<dbReference type="InterPro" id="IPR001574">
    <property type="entry name" value="Ribosome_inactivat_prot"/>
</dbReference>
<dbReference type="InterPro" id="IPR017988">
    <property type="entry name" value="Ribosome_inactivat_prot_CS"/>
</dbReference>
<dbReference type="InterPro" id="IPR016138">
    <property type="entry name" value="Ribosome_inactivat_prot_sub1"/>
</dbReference>
<dbReference type="InterPro" id="IPR016139">
    <property type="entry name" value="Ribosome_inactivat_prot_sub2"/>
</dbReference>
<dbReference type="InterPro" id="IPR035992">
    <property type="entry name" value="Ricin_B-like_lectins"/>
</dbReference>
<dbReference type="InterPro" id="IPR000772">
    <property type="entry name" value="Ricin_B_lectin"/>
</dbReference>
<dbReference type="PANTHER" id="PTHR33453">
    <property type="match status" value="1"/>
</dbReference>
<dbReference type="PANTHER" id="PTHR33453:SF34">
    <property type="entry name" value="RIBOSOME-INACTIVATING PROTEIN"/>
    <property type="match status" value="1"/>
</dbReference>
<dbReference type="Pfam" id="PF00652">
    <property type="entry name" value="Ricin_B_lectin"/>
    <property type="match status" value="2"/>
</dbReference>
<dbReference type="Pfam" id="PF00161">
    <property type="entry name" value="RIP"/>
    <property type="match status" value="1"/>
</dbReference>
<dbReference type="PRINTS" id="PR00396">
    <property type="entry name" value="SHIGARICIN"/>
</dbReference>
<dbReference type="SMART" id="SM00458">
    <property type="entry name" value="RICIN"/>
    <property type="match status" value="2"/>
</dbReference>
<dbReference type="SUPFAM" id="SSF56371">
    <property type="entry name" value="Ribosome inactivating proteins (RIP)"/>
    <property type="match status" value="1"/>
</dbReference>
<dbReference type="SUPFAM" id="SSF50370">
    <property type="entry name" value="Ricin B-like lectins"/>
    <property type="match status" value="2"/>
</dbReference>
<dbReference type="PROSITE" id="PS50231">
    <property type="entry name" value="RICIN_B_LECTIN"/>
    <property type="match status" value="2"/>
</dbReference>
<dbReference type="PROSITE" id="PS00275">
    <property type="entry name" value="SHIGA_RICIN"/>
    <property type="match status" value="1"/>
</dbReference>
<proteinExistence type="evidence at protein level"/>
<organism>
    <name type="scientific">Abrus precatorius</name>
    <name type="common">Indian licorice</name>
    <name type="synonym">Glycine abrus</name>
    <dbReference type="NCBI Taxonomy" id="3816"/>
    <lineage>
        <taxon>Eukaryota</taxon>
        <taxon>Viridiplantae</taxon>
        <taxon>Streptophyta</taxon>
        <taxon>Embryophyta</taxon>
        <taxon>Tracheophyta</taxon>
        <taxon>Spermatophyta</taxon>
        <taxon>Magnoliopsida</taxon>
        <taxon>eudicotyledons</taxon>
        <taxon>Gunneridae</taxon>
        <taxon>Pentapetalae</taxon>
        <taxon>rosids</taxon>
        <taxon>fabids</taxon>
        <taxon>Fabales</taxon>
        <taxon>Fabaceae</taxon>
        <taxon>Papilionoideae</taxon>
        <taxon>50 kb inversion clade</taxon>
        <taxon>NPAAA clade</taxon>
        <taxon>indigoferoid/millettioid clade</taxon>
        <taxon>Abreae</taxon>
        <taxon>Abrus</taxon>
    </lineage>
</organism>
<name>ABRC_ABRPR</name>
<protein>
    <recommendedName>
        <fullName>Abrin-c</fullName>
    </recommendedName>
    <component>
        <recommendedName>
            <fullName>Abrin-c A chain</fullName>
            <ecNumber>3.2.2.22</ecNumber>
        </recommendedName>
        <alternativeName>
            <fullName>rRNA N-glycosidase</fullName>
        </alternativeName>
    </component>
    <component>
        <recommendedName>
            <fullName>Linker peptide</fullName>
        </recommendedName>
    </component>
    <component>
        <recommendedName>
            <fullName>Abrin-c B chain</fullName>
        </recommendedName>
    </component>
</protein>
<keyword id="KW-0903">Direct protein sequencing</keyword>
<keyword id="KW-1015">Disulfide bond</keyword>
<keyword id="KW-0325">Glycoprotein</keyword>
<keyword id="KW-0378">Hydrolase</keyword>
<keyword id="KW-0430">Lectin</keyword>
<keyword id="KW-0611">Plant defense</keyword>
<keyword id="KW-0652">Protein synthesis inhibitor</keyword>
<keyword id="KW-0873">Pyrrolidone carboxylic acid</keyword>
<keyword id="KW-1185">Reference proteome</keyword>
<keyword id="KW-0677">Repeat</keyword>
<keyword id="KW-0732">Signal</keyword>
<keyword id="KW-0800">Toxin</keyword>
<feature type="signal peptide" evidence="1">
    <location>
        <begin position="1"/>
        <end position="34"/>
    </location>
</feature>
<feature type="chain" id="PRO_0000030735" description="Abrin-c A chain" evidence="1">
    <location>
        <begin position="35"/>
        <end position="285"/>
    </location>
</feature>
<feature type="peptide" id="PRO_0000030736" description="Linker peptide" evidence="1">
    <location>
        <begin position="286"/>
        <end position="295"/>
    </location>
</feature>
<feature type="chain" id="PRO_0000030737" description="Abrin-c B chain" evidence="1">
    <location>
        <begin position="296"/>
        <end position="562"/>
    </location>
</feature>
<feature type="domain" description="Ricin B-type lectin 1" evidence="3">
    <location>
        <begin position="307"/>
        <end position="434"/>
    </location>
</feature>
<feature type="repeat" description="1-alpha">
    <location>
        <begin position="317"/>
        <end position="359"/>
    </location>
</feature>
<feature type="repeat" description="1-beta">
    <location>
        <begin position="360"/>
        <end position="400"/>
    </location>
</feature>
<feature type="repeat" description="1-gamma">
    <location>
        <begin position="403"/>
        <end position="435"/>
    </location>
</feature>
<feature type="domain" description="Ricin B-type lectin 2" evidence="3">
    <location>
        <begin position="437"/>
        <end position="561"/>
    </location>
</feature>
<feature type="repeat" description="2-alpha">
    <location>
        <begin position="448"/>
        <end position="483"/>
    </location>
</feature>
<feature type="repeat" description="2-beta">
    <location>
        <begin position="487"/>
        <end position="526"/>
    </location>
</feature>
<feature type="repeat" description="2-gamma">
    <location>
        <begin position="529"/>
        <end position="562"/>
    </location>
</feature>
<feature type="active site" evidence="1">
    <location>
        <position position="198"/>
    </location>
</feature>
<feature type="modified residue" description="Pyrrolidone carboxylic acid" evidence="1">
    <location>
        <position position="35"/>
    </location>
</feature>
<feature type="glycosylation site" description="N-linked (GlcNAc...) asparagine" evidence="2">
    <location>
        <position position="234"/>
    </location>
</feature>
<feature type="glycosylation site" description="N-linked (GlcNAc...) asparagine" evidence="2">
    <location>
        <position position="395"/>
    </location>
</feature>
<feature type="glycosylation site" description="N-linked (GlcNAc...) asparagine" evidence="2">
    <location>
        <position position="435"/>
    </location>
</feature>
<feature type="disulfide bond" description="Interchain (between A and B chains)" evidence="3">
    <location>
        <begin position="281"/>
        <end position="303"/>
    </location>
</feature>
<feature type="disulfide bond" evidence="3">
    <location>
        <begin position="320"/>
        <end position="339"/>
    </location>
</feature>
<feature type="disulfide bond" evidence="3">
    <location>
        <begin position="363"/>
        <end position="380"/>
    </location>
</feature>
<feature type="disulfide bond" evidence="3">
    <location>
        <begin position="451"/>
        <end position="464"/>
    </location>
</feature>
<feature type="disulfide bond" evidence="3">
    <location>
        <begin position="490"/>
        <end position="507"/>
    </location>
</feature>